<proteinExistence type="evidence at transcript level"/>
<accession>P67938</accession>
<accession>Q29628</accession>
<organism>
    <name type="scientific">Bos indicus</name>
    <name type="common">Zebu</name>
    <dbReference type="NCBI Taxonomy" id="9915"/>
    <lineage>
        <taxon>Eukaryota</taxon>
        <taxon>Metazoa</taxon>
        <taxon>Chordata</taxon>
        <taxon>Craniata</taxon>
        <taxon>Vertebrata</taxon>
        <taxon>Euteleostomi</taxon>
        <taxon>Mammalia</taxon>
        <taxon>Eutheria</taxon>
        <taxon>Laurasiatheria</taxon>
        <taxon>Artiodactyla</taxon>
        <taxon>Ruminantia</taxon>
        <taxon>Pecora</taxon>
        <taxon>Bovidae</taxon>
        <taxon>Bovinae</taxon>
        <taxon>Bos</taxon>
    </lineage>
</organism>
<keyword id="KW-0007">Acetylation</keyword>
<keyword id="KW-0010">Activator</keyword>
<keyword id="KW-0053">Apoptosis</keyword>
<keyword id="KW-0090">Biological rhythms</keyword>
<keyword id="KW-0131">Cell cycle</keyword>
<keyword id="KW-0963">Cytoplasm</keyword>
<keyword id="KW-0206">Cytoskeleton</keyword>
<keyword id="KW-0238">DNA-binding</keyword>
<keyword id="KW-0256">Endoplasmic reticulum</keyword>
<keyword id="KW-1017">Isopeptide bond</keyword>
<keyword id="KW-0479">Metal-binding</keyword>
<keyword id="KW-0488">Methylation</keyword>
<keyword id="KW-0496">Mitochondrion</keyword>
<keyword id="KW-1210">Necrosis</keyword>
<keyword id="KW-0539">Nucleus</keyword>
<keyword id="KW-0597">Phosphoprotein</keyword>
<keyword id="KW-1185">Reference proteome</keyword>
<keyword id="KW-0678">Repressor</keyword>
<keyword id="KW-0804">Transcription</keyword>
<keyword id="KW-0805">Transcription regulation</keyword>
<keyword id="KW-0043">Tumor suppressor</keyword>
<keyword id="KW-0832">Ubl conjugation</keyword>
<keyword id="KW-0862">Zinc</keyword>
<sequence length="386" mass="43256">MEESQAELNVEPPLSQETFSDLWNLLPENNLLSSELSAPVDDLLPYTDVATWLDECPNEAPQMPEPSAPAAPPPATPAPATSWPLSSFVPSQKTYPGNYGFRLGFLQSGTAKSVTCTYSPSLNKLFCQLAKTCPVQLWVDSPPPPGTRVRAMAIYKKLEHMTEVVRRCPHHERSSDYSDGLAPPQHLIRVEGNLRAEYLDDRNTFRHSVVVPYESPEIDSECTTIHYNFMCNSSCMGGMNRRPILTIITLEDSCGNLLGRNSFEVRVCACPGRDRRTEEENLRKKGQSCPEPPPRSTKRALPTNTSSSPQPKKKPLDGEYFTLQIRGFKRYEMFRELNDALELKDALDGREPGESRAHSSHLKSKKRPSPSCHKKPMLKREGPDSD</sequence>
<evidence type="ECO:0000250" key="1"/>
<evidence type="ECO:0000250" key="2">
    <source>
        <dbReference type="UniProtKB" id="P02340"/>
    </source>
</evidence>
<evidence type="ECO:0000250" key="3">
    <source>
        <dbReference type="UniProtKB" id="P04637"/>
    </source>
</evidence>
<evidence type="ECO:0000250" key="4">
    <source>
        <dbReference type="UniProtKB" id="P10361"/>
    </source>
</evidence>
<evidence type="ECO:0000256" key="5">
    <source>
        <dbReference type="SAM" id="MobiDB-lite"/>
    </source>
</evidence>
<evidence type="ECO:0000305" key="6"/>
<protein>
    <recommendedName>
        <fullName>Cellular tumor antigen p53</fullName>
    </recommendedName>
    <alternativeName>
        <fullName>Tumor suppressor p53</fullName>
    </alternativeName>
</protein>
<feature type="chain" id="PRO_0000185693" description="Cellular tumor antigen p53">
    <location>
        <begin position="1"/>
        <end position="386"/>
    </location>
</feature>
<feature type="DNA-binding region" evidence="3">
    <location>
        <begin position="94"/>
        <end position="285"/>
    </location>
</feature>
<feature type="region of interest" description="Interaction with CCAR2" evidence="3">
    <location>
        <begin position="1"/>
        <end position="313"/>
    </location>
</feature>
<feature type="region of interest" description="Transcription activation (acidic)">
    <location>
        <begin position="1"/>
        <end position="44"/>
    </location>
</feature>
<feature type="region of interest" description="Disordered" evidence="5">
    <location>
        <begin position="56"/>
        <end position="83"/>
    </location>
</feature>
<feature type="region of interest" description="Interaction with WWOX" evidence="1">
    <location>
        <begin position="63"/>
        <end position="102"/>
    </location>
</feature>
<feature type="region of interest" description="Interaction with HIPK1" evidence="1">
    <location>
        <begin position="92"/>
        <end position="363"/>
    </location>
</feature>
<feature type="region of interest" description="Required for interaction with ZNF385A" evidence="1">
    <location>
        <begin position="92"/>
        <end position="293"/>
    </location>
</feature>
<feature type="region of interest" description="Required for interaction with FBXO42" evidence="1">
    <location>
        <begin position="105"/>
        <end position="229"/>
    </location>
</feature>
<feature type="region of interest" description="Interaction with AXIN1" evidence="1">
    <location>
        <begin position="108"/>
        <end position="285"/>
    </location>
</feature>
<feature type="region of interest" description="Interaction with E4F1" evidence="1">
    <location>
        <begin position="249"/>
        <end position="287"/>
    </location>
</feature>
<feature type="region of interest" description="Interaction with DNA" evidence="1">
    <location>
        <begin position="266"/>
        <end position="273"/>
    </location>
</feature>
<feature type="region of interest" description="Disordered" evidence="5">
    <location>
        <begin position="275"/>
        <end position="318"/>
    </location>
</feature>
<feature type="region of interest" description="Interaction with HIPK2" evidence="1">
    <location>
        <begin position="312"/>
        <end position="353"/>
    </location>
</feature>
<feature type="region of interest" description="Oligomerization">
    <location>
        <begin position="318"/>
        <end position="349"/>
    </location>
</feature>
<feature type="region of interest" description="Disordered" evidence="5">
    <location>
        <begin position="348"/>
        <end position="386"/>
    </location>
</feature>
<feature type="region of interest" description="Interaction with USP7" evidence="1">
    <location>
        <begin position="352"/>
        <end position="356"/>
    </location>
</feature>
<feature type="region of interest" description="Basic (repression of DNA-binding)">
    <location>
        <begin position="361"/>
        <end position="380"/>
    </location>
</feature>
<feature type="short sequence motif" description="Bipartite nuclear localization signal" evidence="1">
    <location>
        <begin position="298"/>
        <end position="314"/>
    </location>
</feature>
<feature type="short sequence motif" description="Nuclear export signal" evidence="1">
    <location>
        <begin position="332"/>
        <end position="343"/>
    </location>
</feature>
<feature type="short sequence motif" description="[KR]-[STA]-K motif">
    <location>
        <begin position="363"/>
        <end position="365"/>
    </location>
</feature>
<feature type="compositionally biased region" description="Pro residues" evidence="5">
    <location>
        <begin position="63"/>
        <end position="77"/>
    </location>
</feature>
<feature type="compositionally biased region" description="Basic and acidic residues" evidence="5">
    <location>
        <begin position="348"/>
        <end position="357"/>
    </location>
</feature>
<feature type="compositionally biased region" description="Basic residues" evidence="5">
    <location>
        <begin position="358"/>
        <end position="377"/>
    </location>
</feature>
<feature type="binding site" evidence="3">
    <location>
        <position position="168"/>
    </location>
    <ligand>
        <name>Zn(2+)</name>
        <dbReference type="ChEBI" id="CHEBI:29105"/>
    </ligand>
</feature>
<feature type="binding site" evidence="3">
    <location>
        <position position="171"/>
    </location>
    <ligand>
        <name>Zn(2+)</name>
        <dbReference type="ChEBI" id="CHEBI:29105"/>
    </ligand>
</feature>
<feature type="binding site" evidence="3">
    <location>
        <position position="231"/>
    </location>
    <ligand>
        <name>Zn(2+)</name>
        <dbReference type="ChEBI" id="CHEBI:29105"/>
    </ligand>
</feature>
<feature type="binding site" evidence="3">
    <location>
        <position position="235"/>
    </location>
    <ligand>
        <name>Zn(2+)</name>
        <dbReference type="ChEBI" id="CHEBI:29105"/>
    </ligand>
</feature>
<feature type="site" description="Interaction with DNA" evidence="3">
    <location>
        <position position="112"/>
    </location>
</feature>
<feature type="modified residue" description="Phosphoserine; by CDK5, PRPK, AMPK, NUAK1 and ATM" evidence="3">
    <location>
        <position position="15"/>
    </location>
</feature>
<feature type="modified residue" description="Phosphothreonine; by CK1, VRK1 and VRK2" evidence="3">
    <location>
        <position position="18"/>
    </location>
</feature>
<feature type="modified residue" description="Phosphoserine; by CHEK2, CK1 and PLK3" evidence="3">
    <location>
        <position position="20"/>
    </location>
</feature>
<feature type="modified residue" description="Phosphoserine; by CDK5 and CDK7" evidence="3">
    <location>
        <position position="33"/>
    </location>
</feature>
<feature type="modified residue" description="Phosphoserine; by MAPKAPK5" evidence="3">
    <location>
        <position position="37"/>
    </location>
</feature>
<feature type="modified residue" description="N6-acetyllysine" evidence="3">
    <location>
        <position position="112"/>
    </location>
</feature>
<feature type="modified residue" description="N6-lactoyllysine" evidence="3">
    <location>
        <position position="112"/>
    </location>
</feature>
<feature type="modified residue" description="N6-lactoyllysine" evidence="3">
    <location>
        <position position="131"/>
    </location>
</feature>
<feature type="modified residue" description="Phosphoserine; by AURKB" evidence="3">
    <location>
        <position position="175"/>
    </location>
</feature>
<feature type="modified residue" description="Phosphoserine; by AURKB" evidence="3">
    <location>
        <position position="262"/>
    </location>
</feature>
<feature type="modified residue" description="Phosphothreonine; by AURKB" evidence="3">
    <location>
        <position position="277"/>
    </location>
</feature>
<feature type="modified residue" description="N6-acetyllysine" evidence="3">
    <location>
        <position position="298"/>
    </location>
</feature>
<feature type="modified residue" description="Phosphoserine; by AURKA, CDK1 and CDK2" evidence="3">
    <location>
        <position position="308"/>
    </location>
</feature>
<feature type="modified residue" description="N6-acetyllysine" evidence="2">
    <location>
        <position position="314"/>
    </location>
</feature>
<feature type="modified residue" description="Omega-N-methylarginine" evidence="3">
    <location>
        <position position="326"/>
    </location>
</feature>
<feature type="modified residue" description="Symmetric dimethylarginine" evidence="3">
    <location>
        <position position="330"/>
    </location>
</feature>
<feature type="modified residue" description="N6,N6-dimethyllysine; alternate" evidence="3">
    <location>
        <position position="363"/>
    </location>
</feature>
<feature type="modified residue" description="N6-methyllysine; by SMYD2; alternate" evidence="3">
    <location>
        <position position="363"/>
    </location>
</feature>
<feature type="modified residue" description="N6-methyllysine; by SETD7" evidence="3">
    <location>
        <position position="365"/>
    </location>
</feature>
<feature type="modified residue" description="N6,N6-dimethyllysine; by EHMT1 and EHMT2; alternate" evidence="3">
    <location>
        <position position="366"/>
    </location>
</feature>
<feature type="modified residue" description="N6-acetyllysine; alternate" evidence="3">
    <location>
        <position position="366"/>
    </location>
</feature>
<feature type="modified residue" description="N6-acetyllysine" evidence="3">
    <location>
        <position position="374"/>
    </location>
</feature>
<feature type="modified residue" description="N6,N6-dimethyllysine; alternate" evidence="3">
    <location>
        <position position="375"/>
    </location>
</feature>
<feature type="modified residue" description="N6-acetyllysine; alternate" evidence="3">
    <location>
        <position position="375"/>
    </location>
</feature>
<feature type="modified residue" description="N6-methyllysine; by KMT5A; alternate" evidence="3">
    <location>
        <position position="375"/>
    </location>
</feature>
<feature type="modified residue" description="Phosphoserine; by CK2, CDK2 and NUAK1" evidence="3">
    <location>
        <position position="385"/>
    </location>
</feature>
<feature type="cross-link" description="Glycyl lysine isopeptide (Lys-Gly) (interchain with G-Cter in ubiquitin)" evidence="3">
    <location>
        <position position="284"/>
    </location>
</feature>
<feature type="cross-link" description="Glycyl lysine isopeptide (Lys-Gly) (interchain with G-Cter in ubiquitin)" evidence="3">
    <location>
        <position position="285"/>
    </location>
</feature>
<feature type="cross-link" description="Glycyl lysine isopeptide (Lys-Gly) (interchain with G-Cter in ubiquitin)" evidence="3">
    <location>
        <position position="344"/>
    </location>
</feature>
<feature type="cross-link" description="Glycyl lysine isopeptide (Lys-Gly) (interchain with G-Cter in SUMO)" evidence="1">
    <location>
        <position position="379"/>
    </location>
</feature>
<name>P53_BOSIN</name>
<gene>
    <name type="primary">TP53</name>
</gene>
<comment type="function">
    <text evidence="2 3">Multifunctional transcription factor that induces cell cycle arrest, DNA repair or apoptosis upon binding to its target DNA sequence. Acts as a tumor suppressor in many tumor types; induces growth arrest or apoptosis depending on the physiological circumstances and cell type. Negatively regulates cell division by controlling expression of a set of genes required for this process. One of the activated genes is an inhibitor of cyclin-dependent kinases. Apoptosis induction seems to be mediated either by stimulation of BAX and FAS antigen expression, or by repression of Bcl-2 expression. Its pro-apoptotic activity is activated via its interaction with PPP1R13B/ASPP1 or TP53BP2/ASPP2 (By similarity). However, this activity is inhibited when the interaction with PPP1R13B/ASPP1 or TP53BP2/ASPP2 is displaced by PPP1R13L/iASPP (By similarity). In cooperation with mitochondrial PPIF is involved in activating oxidative stress-induced necrosis; the function is largely independent of transcription. Prevents CDK7 kinase activity when associated to CAK complex in response to DNA damage, thus stopping cell cycle progression. Induces the transcription of long intergenic non-coding RNA p21 (lincRNA-p21) and lincRNA-Mkln1. LincRNA-p21 participates in TP53-dependent transcriptional repression leading to apoptosis and seems to have an effect on cell-cycle regulation. Regulates the circadian clock by repressing CLOCK-ARNTL/BMAL1-mediated transcriptional activation of PER2.</text>
</comment>
<comment type="cofactor">
    <cofactor evidence="1">
        <name>Zn(2+)</name>
        <dbReference type="ChEBI" id="CHEBI:29105"/>
    </cofactor>
    <text evidence="1">Binds 1 zinc ion per subunit.</text>
</comment>
<comment type="subunit">
    <text evidence="2 3 4">Forms homodimers and homotetramers (By similarity). Binds DNA as a homotetramer. Interacts with AXIN1. Probably part of a complex consisting of TP53, HIPK2 and AXIN1. Interacts with histone acetyltransferases EP300 and methyltransferases HRMT1L2 and CARM1, and recruits them to promoters. Interacts (via C-terminus) with TAF1; when TAF1 is part of the TFIID complex. Interacts with ING4; this interaction may be indirect. Found in a complex with CABLES1 and TP73. Interacts with HIPK1, HIPK2, and TP53INP1. Interacts with WWOX. Interacts with USP7 and SYVN1. Interacts with HSP90AB1. Interacts with CHD8; leading to recruit histone H1 and prevent transactivation activity. Interacts with ARMC10, BANP, CDKN2AIP, NUAK1, STK11/LKB1, UHRF2 and E4F. Interacts with YWHAZ; the interaction enhances TP53 transcriptional activity. Phosphorylation of YWHAZ on 'Ser-58' inhibits this interaction. Interacts (via DNA-binding domain) with MAML1 (via N-terminus). Interacts with MKRN1. Interacts with PML (via C-terminus). Interacts with MDM2; leading to ubiquitination and proteasomal degradation of TP53. Directly interacts with FBXO42; leading to ubiquitination and degradation of TP53. Interacts (phosphorylated at Ser-15 by ATM) with the phosphatase PP2A-PPP2R5C holoenzyme; regulates stress-induced TP53-dependent inhibition of cell proliferation. Interacts with PPP2R2A. Interacts with AURKA, DAXX, BRD7 and TRIM24. Interacts (when monomethylated at Lys-375) with L3MBTL1. Interacts with GRK5. Binds to the CAK complex (CDK7, cyclin H and MAT1) in response to DNA damage. Interacts with CDK5 in neurons. Interacts with AURKB, SETD2, UHRF2 and NOC2L. Interacts (via N-terminus) with PTK2/FAK1; this promotes ubiquitination by MDM2. Interacts with PTK2B/PYK2; this promotes ubiquitination by MDM2. Interacts with PRKCG. Interacts with PPIF; the association implicates preferentially tetrameric TP53, is induced by oxidative stress and is impaired by cyclosporin A (CsA). Interacts with SNAI1; the interaction induces SNAI1 degradation via MDM2-mediated ubiquitination and inhibits SNAI1-induced cell invasion. Interacts with UBC9. Interacts with ZNF385B; the interaction is direct. Interacts (via DNA-binding domain) with ZNF385A; the interaction is direct and enhances p53/TP53 transactivation functions on cell-cycle arrest target genes, resulting in growth arrest (By similarity). Interacts with ANKRD2. Interacts with RFFL and RNF34; involved in p53/TP53 ubiquitination. Interacts with MTA1 and COP1. Interacts with CCAR2 (via N-terminus). Interacts with MORC3. Interacts (via C-terminus) with POU4F2 (via C-terminus). Interacts (via oligomerization region) with NOP53; the interaction is direct and may prevent the MDM2-mediated proteasomal degradation of TP53. Interacts with AFG1L; mediates mitochondrial translocation of TP53. Interacts with UBD (By similarity). Interacts with TAF6 (By similarity). Interacts with C10orf90/FATS; the interaction inhibits binding of TP53 and MDM2 (By similarity). Interacts with NUPR1; interaction is stress-dependent. Forms a complex with EP300 and NUPR1; this complex binds CDKN1A promoter leading to transcriptional induction of CDKN1A (By similarity). Interacts with PRMT5 in response to DNA damage; the interaction is TTC5/STRAP dependent (By similarity). Interacts with PPP1R13L (via SH3 domain and ANK repeats); the interaction inhibits pro-apoptotic activity of p53/TP53 (By similarity). Interacts with PPP1R13B/ASPP1 and TP53BP2/ASPP2; the interactions promotes pro-apoptotic activity (By similarity). When phosphorylated at Ser-15, interacts with DDX3X and gamma-tubulin (By similarity). Interacts with KAT7/HBO1; leading to inhibit histone acetyltransferase activity of KAT7/HBO1 (By similarity). Interacts with S100A4; this interaction promotes TP53 degradation (By similarity). Interacts with TTC5/STRAP; the interaction may result in increased mitochondrial-dependent apoptosis (By similarity). Interacts with NQO1; this interaction is NADH-dependent, stabilizes TP53 in response to oxidative stress and protects it from ubiquitin-independent degradation by the 20S proteasome (By similarity). Interacts with DAZAP2 at TP53 target gene promoters; the interaction is triggered by DNA damage and leads to modulation of the expression of a subset of TP53 target genes, reducing DNA damage-induced cell death by limiting the expression of cell death-mediating TP53 target genes (By similarity). Interacts (via N-terminus) with ZNF768 (via zinc-finger domains); interaction might be facilitated by TP53 oligomerization state (By similarity). Forms a ternary complex with ALDOB and G6PD; this interaction is direct. ALDOB stabilizes the complex inhibiting G6PD activity and keeping oxidative pentose phosphate metabolism in check. Interacts with HSPA9/MOT-2; the interaction promotes the degradation of TP53 (By similarity). Interacts with FBXO22; this interaction promotes TP53 proteasomal degradation (By similarity).</text>
</comment>
<comment type="subcellular location">
    <subcellularLocation>
        <location evidence="3">Cytoplasm</location>
    </subcellularLocation>
    <subcellularLocation>
        <location evidence="3">Nucleus</location>
    </subcellularLocation>
    <subcellularLocation>
        <location evidence="3">Nucleus</location>
        <location evidence="3">PML body</location>
    </subcellularLocation>
    <subcellularLocation>
        <location evidence="3">Endoplasmic reticulum</location>
    </subcellularLocation>
    <subcellularLocation>
        <location evidence="3">Mitochondrion matrix</location>
    </subcellularLocation>
    <subcellularLocation>
        <location evidence="3">Cytoplasm</location>
        <location evidence="3">Cytoskeleton</location>
        <location evidence="3">Microtubule organizing center</location>
        <location evidence="3">Centrosome</location>
    </subcellularLocation>
    <text evidence="3">Interaction with BANP promotes nuclear localization. Recruited into PML bodies together with CHEK2. Translocates to mitochondria upon oxidative stress. Translocates to mitochondria in response to mitomycin C treatment (By similarity). Competitive inhibition of TP53 interaction with HSPA9/MOT-2 by UBXN2A results in increased protein abundance and subsequent translocation of TP53 to the nucleus (By similarity).</text>
</comment>
<comment type="domain">
    <text evidence="3">The N-terminal and C-terminal disordered regions undergo liquid-liquid phase separation (LLPS) following homotetramerization and activation. Post-translational modifications, such as phosphorylation or lactylation affect the ability to undergo LLPS.</text>
</comment>
<comment type="domain">
    <text evidence="3">The nuclear export signal acts as a transcriptional repression domain. The TADI and TADII motifs (residues 17 to 25 and 48 to 56) correspond both to 9aaTAD motifs which are transactivation domains present in a large number of yeast and animal transcription factors.</text>
</comment>
<comment type="PTM">
    <text evidence="1 3">Phosphorylation on Ser residues mediates transcriptional activation. Phosphorylated on Thr-18 by VRK1, which may prevent the interaction with MDM2. Phosphorylated on Ser-20 by CHEK2 in response to DNA damage, which prevents ubiquitination by MDM2. Phosphorylated on Ser-20 by PLK3 in response to reactive oxygen species (ROS), promoting p53/TP53-mediated apoptosis. Phosphorylated on Ser-33 by CDK7 in a CAK complex in response to DNA damage. Phosphorylated by HIPK1. Phosphorylated on Ser-385 following UV but not gamma irradiation. Stabilized by CDK5-mediated phosphorylation in response to genotoxic and oxidative stresses at Ser-15 and Ser-33, leading to accumulation of p53/TP53, particularly in the nucleus, thus inducing the transactivation of p53/TP53 target genes. Phosphorylated at Ser-308 and Ser-385 by CDK2 in response to DNA-damage. Phosphorylated on Ser-385 following UV but not gamma irradiation (By similarity). Phosphorylation at Ser-15 is required for interaction with DDX3X and gamma-tubulin (By similarity). Phosphorylation at Ser-385 regulates its ability to undergo liquid-liquid phase separation by increasing fluidity of TP53/p53 condensates (By similarity).</text>
</comment>
<comment type="PTM">
    <text evidence="3">Monomethylated at Lys-365 by SETD7, leading to stabilization and increased transcriptional activation. Monomethylated at Lys-363 by SMYD2, leading to decreased DNA-binding activity and subsequent transcriptional regulation activity. Lys-365 monomethylation prevents interaction with SMYD2 and subsequent monomethylation at Lys-363. Dimethylated at Lys-366 by EHMT1 and EHMT2. Monomethylated at Lys-375 by KMT5A, promoting interaction with L3MBTL1 and leading to repress transcriptional activity. Demethylation of dimethylated Lys-363 by KDM1A prevents interaction with TP53BP1 and represses TP53-mediated transcriptional activation (By similarity). Monomethylated at Arg-326 and dimethylated at Arg-330 by PRMT5; methylation is increased after DNA damage and might possibly affect TP53 target gene specificity (By similarity).</text>
</comment>
<comment type="PTM">
    <text evidence="1">Sumoylated with SUMO1. Sumoylated at Lys-379 by UBC9 (By similarity).</text>
</comment>
<comment type="PTM">
    <text evidence="2 3">Ubiquitinated by MDM2 and SYVN1, which leads to proteasomal degradation. Ubiquitinated by RFWD3, which works in cooperation with MDM2 and may catalyze the formation of short polyubiquitin chains on p53/TP53 that are not targeted to the proteasome. Ubiquitinated by MKRN1, which leads to proteasomal degradation. Deubiquitinated by USP10, leading to stabilize it. Ubiquitinated by TRIM24, RFFL, RNF34 and RNF125, which leads to proteasomal degradation. Ubiquitination by TOPORS induces degradation. Deubiquitination by USP7, leading to stabilize it. Ubiquitinated by COP1, which leads to proteasomal degradation (By similarity). Ubiquitination and subsequent proteasomal degradation is negatively regulated by CCAR2 (By similarity). Polyubiquitinated by C10orf90/FATS, polyubiquitination is 'Lys-48'-linkage independent and non-proteolytic, leading to TP53 stabilization (By similarity). Interacts with MORN3; the interactions mediate post-transcriptional modifications of TP53 by MDM2 and SIRT1 (By similarity). Deubiquitinated by USP3, leading to stabilization (By similarity). Ubiquitinated by MSL2, promoting its cytoplasmic localization (By similarity). Also ubiquitinated by the SCF(FBXO22)-KDMA4A complex; leading to proteasomal degradation (By similarity).</text>
</comment>
<comment type="PTM">
    <text evidence="3">Acetylation of Lys-375 by CREBBP enhances transcriptional activity. Acetylation of Lys-375 by EP300. Deacetylation of Lys-375 by SIRT1 impairs its ability to induce proapoptotic program and modulate cell senescence. Deacetylation by SIRT2 impairs its ability to induce transcription activation in a AKT-dependent manner. Acetylation at Lys-374 increases stability. Deacetylation at Lys-374 by SIRT6 decreases its stability, thereby regulating cell senescence. Acetylated at Lys-112 by KAT5, KAT6A and KAT8; regulating its ability to induce proapoptotic program.</text>
</comment>
<comment type="PTM">
    <text evidence="3">Lactylation by AARS1 prevents ability to undergo liquid-liquid phase separation (LLPS), thereby inhibiting transcription factor activity.</text>
</comment>
<comment type="disease">
    <text>p53 is found in increased amounts in a wide variety of transformed cells. p53 is frequently mutated or inactivated in many types of cancer.</text>
</comment>
<comment type="similarity">
    <text evidence="6">Belongs to the p53 family.</text>
</comment>
<reference key="1">
    <citation type="submission" date="1997-04" db="EMBL/GenBank/DDBJ databases">
        <title>Cloning, expression and site-specific mutagenesis of a cDNA encoding the bovine p53 tumour suppressor protein.</title>
        <authorList>
            <person name="Bishop R.R.P."/>
            <person name="Gobright E.E.I."/>
        </authorList>
    </citation>
    <scope>NUCLEOTIDE SEQUENCE [MRNA]</scope>
    <source>
        <strain>Boran</strain>
        <tissue>Blood</tissue>
    </source>
</reference>
<dbReference type="EMBL" id="U74486">
    <property type="protein sequence ID" value="AAB51214.1"/>
    <property type="molecule type" value="mRNA"/>
</dbReference>
<dbReference type="RefSeq" id="XP_019837670.1">
    <property type="nucleotide sequence ID" value="XM_019982111.2"/>
</dbReference>
<dbReference type="SMR" id="P67938"/>
<dbReference type="GeneID" id="109574238"/>
<dbReference type="KEGG" id="biu:109574238"/>
<dbReference type="CTD" id="7157"/>
<dbReference type="OrthoDB" id="11222at91561"/>
<dbReference type="Proteomes" id="UP000515132">
    <property type="component" value="Chromosome 19"/>
</dbReference>
<dbReference type="GO" id="GO:0005813">
    <property type="term" value="C:centrosome"/>
    <property type="evidence" value="ECO:0000250"/>
    <property type="project" value="UniProtKB"/>
</dbReference>
<dbReference type="GO" id="GO:0005737">
    <property type="term" value="C:cytoplasm"/>
    <property type="evidence" value="ECO:0000250"/>
    <property type="project" value="UniProtKB"/>
</dbReference>
<dbReference type="GO" id="GO:0005783">
    <property type="term" value="C:endoplasmic reticulum"/>
    <property type="evidence" value="ECO:0007669"/>
    <property type="project" value="UniProtKB-SubCell"/>
</dbReference>
<dbReference type="GO" id="GO:0005759">
    <property type="term" value="C:mitochondrial matrix"/>
    <property type="evidence" value="ECO:0007669"/>
    <property type="project" value="UniProtKB-SubCell"/>
</dbReference>
<dbReference type="GO" id="GO:0005739">
    <property type="term" value="C:mitochondrion"/>
    <property type="evidence" value="ECO:0000250"/>
    <property type="project" value="UniProtKB"/>
</dbReference>
<dbReference type="GO" id="GO:0005730">
    <property type="term" value="C:nucleolus"/>
    <property type="evidence" value="ECO:0000250"/>
    <property type="project" value="UniProtKB"/>
</dbReference>
<dbReference type="GO" id="GO:0005634">
    <property type="term" value="C:nucleus"/>
    <property type="evidence" value="ECO:0000250"/>
    <property type="project" value="UniProtKB"/>
</dbReference>
<dbReference type="GO" id="GO:0016605">
    <property type="term" value="C:PML body"/>
    <property type="evidence" value="ECO:0007669"/>
    <property type="project" value="UniProtKB-SubCell"/>
</dbReference>
<dbReference type="GO" id="GO:0036310">
    <property type="term" value="F:ATP-dependent DNA/DNA annealing activity"/>
    <property type="evidence" value="ECO:0000250"/>
    <property type="project" value="UniProtKB"/>
</dbReference>
<dbReference type="GO" id="GO:0005507">
    <property type="term" value="F:copper ion binding"/>
    <property type="evidence" value="ECO:0000250"/>
    <property type="project" value="UniProtKB"/>
</dbReference>
<dbReference type="GO" id="GO:0003677">
    <property type="term" value="F:DNA binding"/>
    <property type="evidence" value="ECO:0000250"/>
    <property type="project" value="UniProtKB"/>
</dbReference>
<dbReference type="GO" id="GO:0000981">
    <property type="term" value="F:DNA-binding transcription factor activity, RNA polymerase II-specific"/>
    <property type="evidence" value="ECO:0000250"/>
    <property type="project" value="UniProtKB"/>
</dbReference>
<dbReference type="GO" id="GO:0140693">
    <property type="term" value="F:molecular condensate scaffold activity"/>
    <property type="evidence" value="ECO:0000250"/>
    <property type="project" value="UniProtKB"/>
</dbReference>
<dbReference type="GO" id="GO:1990841">
    <property type="term" value="F:promoter-specific chromatin binding"/>
    <property type="evidence" value="ECO:0000250"/>
    <property type="project" value="UniProtKB"/>
</dbReference>
<dbReference type="GO" id="GO:0000978">
    <property type="term" value="F:RNA polymerase II cis-regulatory region sequence-specific DNA binding"/>
    <property type="evidence" value="ECO:0000250"/>
    <property type="project" value="UniProtKB"/>
</dbReference>
<dbReference type="GO" id="GO:0090398">
    <property type="term" value="P:cellular senescence"/>
    <property type="evidence" value="ECO:0000250"/>
    <property type="project" value="UniProtKB"/>
</dbReference>
<dbReference type="GO" id="GO:0048512">
    <property type="term" value="P:circadian behavior"/>
    <property type="evidence" value="ECO:0000250"/>
    <property type="project" value="UniProtKB"/>
</dbReference>
<dbReference type="GO" id="GO:0006974">
    <property type="term" value="P:DNA damage response"/>
    <property type="evidence" value="ECO:0000250"/>
    <property type="project" value="UniProtKB"/>
</dbReference>
<dbReference type="GO" id="GO:0043153">
    <property type="term" value="P:entrainment of circadian clock by photoperiod"/>
    <property type="evidence" value="ECO:0000250"/>
    <property type="project" value="UniProtKB"/>
</dbReference>
<dbReference type="GO" id="GO:0030308">
    <property type="term" value="P:negative regulation of cell growth"/>
    <property type="evidence" value="ECO:0000250"/>
    <property type="project" value="UniProtKB"/>
</dbReference>
<dbReference type="GO" id="GO:0045892">
    <property type="term" value="P:negative regulation of DNA-templated transcription"/>
    <property type="evidence" value="ECO:0000250"/>
    <property type="project" value="UniProtKB"/>
</dbReference>
<dbReference type="GO" id="GO:0006289">
    <property type="term" value="P:nucleotide-excision repair"/>
    <property type="evidence" value="ECO:0000250"/>
    <property type="project" value="UniProtKB"/>
</dbReference>
<dbReference type="GO" id="GO:0097252">
    <property type="term" value="P:oligodendrocyte apoptotic process"/>
    <property type="evidence" value="ECO:0000250"/>
    <property type="project" value="UniProtKB"/>
</dbReference>
<dbReference type="GO" id="GO:0043065">
    <property type="term" value="P:positive regulation of apoptotic process"/>
    <property type="evidence" value="ECO:0000250"/>
    <property type="project" value="UniProtKB"/>
</dbReference>
<dbReference type="GO" id="GO:2001244">
    <property type="term" value="P:positive regulation of intrinsic apoptotic signaling pathway"/>
    <property type="evidence" value="ECO:0000250"/>
    <property type="project" value="UniProtKB"/>
</dbReference>
<dbReference type="GO" id="GO:0045944">
    <property type="term" value="P:positive regulation of transcription by RNA polymerase II"/>
    <property type="evidence" value="ECO:0000250"/>
    <property type="project" value="UniProtKB"/>
</dbReference>
<dbReference type="GO" id="GO:0051262">
    <property type="term" value="P:protein tetramerization"/>
    <property type="evidence" value="ECO:0007669"/>
    <property type="project" value="InterPro"/>
</dbReference>
<dbReference type="CDD" id="cd08367">
    <property type="entry name" value="P53"/>
    <property type="match status" value="1"/>
</dbReference>
<dbReference type="FunFam" id="2.60.40.720:FF:000003">
    <property type="entry name" value="Cellular tumor antigen p53"/>
    <property type="match status" value="1"/>
</dbReference>
<dbReference type="FunFam" id="4.10.170.10:FF:000003">
    <property type="entry name" value="Cellular tumor antigen p53"/>
    <property type="match status" value="1"/>
</dbReference>
<dbReference type="Gene3D" id="2.60.40.720">
    <property type="match status" value="1"/>
</dbReference>
<dbReference type="Gene3D" id="6.10.50.20">
    <property type="match status" value="1"/>
</dbReference>
<dbReference type="Gene3D" id="4.10.170.10">
    <property type="entry name" value="p53-like tetramerisation domain"/>
    <property type="match status" value="1"/>
</dbReference>
<dbReference type="InterPro" id="IPR008967">
    <property type="entry name" value="p53-like_TF_DNA-bd_sf"/>
</dbReference>
<dbReference type="InterPro" id="IPR012346">
    <property type="entry name" value="p53/RUNT-type_TF_DNA-bd_sf"/>
</dbReference>
<dbReference type="InterPro" id="IPR011615">
    <property type="entry name" value="p53_DNA-bd"/>
</dbReference>
<dbReference type="InterPro" id="IPR036674">
    <property type="entry name" value="p53_tetramer_sf"/>
</dbReference>
<dbReference type="InterPro" id="IPR010991">
    <property type="entry name" value="p53_tetrameristn"/>
</dbReference>
<dbReference type="InterPro" id="IPR013872">
    <property type="entry name" value="p53_transactivation_domain"/>
</dbReference>
<dbReference type="InterPro" id="IPR002117">
    <property type="entry name" value="p53_tumour_suppressor"/>
</dbReference>
<dbReference type="PANTHER" id="PTHR11447">
    <property type="entry name" value="CELLULAR TUMOR ANTIGEN P53"/>
    <property type="match status" value="1"/>
</dbReference>
<dbReference type="PANTHER" id="PTHR11447:SF6">
    <property type="entry name" value="CELLULAR TUMOR ANTIGEN P53"/>
    <property type="match status" value="1"/>
</dbReference>
<dbReference type="Pfam" id="PF00870">
    <property type="entry name" value="P53"/>
    <property type="match status" value="1"/>
</dbReference>
<dbReference type="Pfam" id="PF08563">
    <property type="entry name" value="P53_TAD"/>
    <property type="match status" value="1"/>
</dbReference>
<dbReference type="Pfam" id="PF07710">
    <property type="entry name" value="P53_tetramer"/>
    <property type="match status" value="1"/>
</dbReference>
<dbReference type="PRINTS" id="PR00386">
    <property type="entry name" value="P53SUPPRESSR"/>
</dbReference>
<dbReference type="SUPFAM" id="SSF47719">
    <property type="entry name" value="p53 tetramerization domain"/>
    <property type="match status" value="1"/>
</dbReference>
<dbReference type="SUPFAM" id="SSF49417">
    <property type="entry name" value="p53-like transcription factors"/>
    <property type="match status" value="1"/>
</dbReference>
<dbReference type="PROSITE" id="PS00348">
    <property type="entry name" value="P53"/>
    <property type="match status" value="1"/>
</dbReference>